<evidence type="ECO:0000255" key="1">
    <source>
        <dbReference type="PROSITE-ProRule" id="PRU10071"/>
    </source>
</evidence>
<evidence type="ECO:0000305" key="2"/>
<proteinExistence type="inferred from homology"/>
<protein>
    <recommendedName>
        <fullName>Putative tributyltin chloride resistance protein</fullName>
    </recommendedName>
</protein>
<name>TBTA_ALTSM</name>
<feature type="chain" id="PRO_0000196565" description="Putative tributyltin chloride resistance protein">
    <location>
        <begin position="1"/>
        <end position="207"/>
    </location>
</feature>
<feature type="region of interest" description="Slt-type domain">
    <location>
        <begin position="37"/>
        <end position="122"/>
    </location>
</feature>
<feature type="active site" evidence="1">
    <location>
        <position position="49"/>
    </location>
</feature>
<accession>P32820</accession>
<dbReference type="EMBL" id="D16369">
    <property type="status" value="NOT_ANNOTATED_CDS"/>
    <property type="molecule type" value="Genomic_DNA"/>
</dbReference>
<dbReference type="SMR" id="P32820"/>
<dbReference type="GO" id="GO:0016020">
    <property type="term" value="C:membrane"/>
    <property type="evidence" value="ECO:0007669"/>
    <property type="project" value="InterPro"/>
</dbReference>
<dbReference type="GO" id="GO:0008933">
    <property type="term" value="F:peptidoglycan lytic transglycosylase activity"/>
    <property type="evidence" value="ECO:0007669"/>
    <property type="project" value="InterPro"/>
</dbReference>
<dbReference type="GO" id="GO:0000270">
    <property type="term" value="P:peptidoglycan metabolic process"/>
    <property type="evidence" value="ECO:0007669"/>
    <property type="project" value="InterPro"/>
</dbReference>
<dbReference type="CDD" id="cd16894">
    <property type="entry name" value="MltD-like"/>
    <property type="match status" value="1"/>
</dbReference>
<dbReference type="Gene3D" id="1.10.530.10">
    <property type="match status" value="1"/>
</dbReference>
<dbReference type="InterPro" id="IPR023346">
    <property type="entry name" value="Lysozyme-like_dom_sf"/>
</dbReference>
<dbReference type="InterPro" id="IPR000189">
    <property type="entry name" value="Transglyc_AS"/>
</dbReference>
<dbReference type="InterPro" id="IPR008258">
    <property type="entry name" value="Transglycosylase_SLT_dom_1"/>
</dbReference>
<dbReference type="PANTHER" id="PTHR37423:SF2">
    <property type="entry name" value="MEMBRANE-BOUND LYTIC MUREIN TRANSGLYCOSYLASE C"/>
    <property type="match status" value="1"/>
</dbReference>
<dbReference type="PANTHER" id="PTHR37423">
    <property type="entry name" value="SOLUBLE LYTIC MUREIN TRANSGLYCOSYLASE-RELATED"/>
    <property type="match status" value="1"/>
</dbReference>
<dbReference type="Pfam" id="PF01464">
    <property type="entry name" value="SLT"/>
    <property type="match status" value="1"/>
</dbReference>
<dbReference type="SUPFAM" id="SSF53955">
    <property type="entry name" value="Lysozyme-like"/>
    <property type="match status" value="1"/>
</dbReference>
<dbReference type="PROSITE" id="PS00922">
    <property type="entry name" value="TRANSGLYCOSYLASE"/>
    <property type="match status" value="1"/>
</dbReference>
<reference key="1">
    <citation type="journal article" date="1993" name="Biochem. Biophys. Res. Commun.">
        <title>Cloning of gene responsible for tributyltin chloride (TBTC1) resistance in TBTC1-resistant marine bacterium, Alteromonas sp. M-1.</title>
        <authorList>
            <person name="Fukagawa T."/>
            <person name="Suzuki S."/>
        </authorList>
    </citation>
    <scope>NUCLEOTIDE SEQUENCE [GENOMIC DNA]</scope>
</reference>
<reference key="2">
    <citation type="journal article" date="1994" name="Trends Biochem. Sci.">
        <title>A conserved domain in putative bacterial and bacteriophage transglycosylases.</title>
        <authorList>
            <person name="Koonin E.V."/>
            <person name="Rudd K.E."/>
        </authorList>
    </citation>
    <scope>SEQUENCE REVISION</scope>
    <scope>SIMILARITY TO SLT</scope>
</reference>
<comment type="similarity">
    <text evidence="2">Belongs to the transglycosylase Slt family.</text>
</comment>
<comment type="sequence caution" evidence="2">
    <conflict type="frameshift">
        <sequence resource="EMBL" id="D16369"/>
    </conflict>
    <text>Extend the C-terminal part and restore the similarity to slt.</text>
</comment>
<organism>
    <name type="scientific">Alteromonas sp. (strain M-1)</name>
    <dbReference type="NCBI Taxonomy" id="29457"/>
    <lineage>
        <taxon>Bacteria</taxon>
        <taxon>Pseudomonadati</taxon>
        <taxon>Pseudomonadota</taxon>
        <taxon>Gammaproteobacteria</taxon>
        <taxon>Alteromonadales</taxon>
        <taxon>Alteromonadaceae</taxon>
        <taxon>Alteromonas/Salinimonas group</taxon>
        <taxon>Alteromonas</taxon>
    </lineage>
</organism>
<sequence length="207" mass="23653">MYNNALHGIYLTQITWMKSARAEPYLYYIVTEVEKRNLPIELALMPLIESDFNASAYSHKHASGLWQLTPAIAKYFKVQISPWYDGRQDVIDSTRAALNFMEYLHKRFDGDWYHAIAALNLGEGRVLRAISNIKNKANPLIFQLKTAQTNQSVRAKRTSCGTIIKKPKNAFPAILNSPTIAVLPVDCAVILDNRKQWQQLEIFKPMV</sequence>
<gene>
    <name type="primary">tbtA</name>
</gene>